<feature type="chain" id="PRO_0000350791" description="Uncharacterized transmembrane protein DDB_G0284989">
    <location>
        <begin position="1"/>
        <end position="71"/>
    </location>
</feature>
<feature type="transmembrane region" description="Helical" evidence="1">
    <location>
        <begin position="12"/>
        <end position="34"/>
    </location>
</feature>
<accession>Q54NT8</accession>
<name>Y6304_DICDI</name>
<proteinExistence type="predicted"/>
<gene>
    <name type="ORF">DDB_G0284989</name>
</gene>
<organism>
    <name type="scientific">Dictyostelium discoideum</name>
    <name type="common">Social amoeba</name>
    <dbReference type="NCBI Taxonomy" id="44689"/>
    <lineage>
        <taxon>Eukaryota</taxon>
        <taxon>Amoebozoa</taxon>
        <taxon>Evosea</taxon>
        <taxon>Eumycetozoa</taxon>
        <taxon>Dictyostelia</taxon>
        <taxon>Dictyosteliales</taxon>
        <taxon>Dictyosteliaceae</taxon>
        <taxon>Dictyostelium</taxon>
    </lineage>
</organism>
<keyword id="KW-0472">Membrane</keyword>
<keyword id="KW-1185">Reference proteome</keyword>
<keyword id="KW-0812">Transmembrane</keyword>
<keyword id="KW-1133">Transmembrane helix</keyword>
<reference key="1">
    <citation type="journal article" date="2005" name="Nature">
        <title>The genome of the social amoeba Dictyostelium discoideum.</title>
        <authorList>
            <person name="Eichinger L."/>
            <person name="Pachebat J.A."/>
            <person name="Gloeckner G."/>
            <person name="Rajandream M.A."/>
            <person name="Sucgang R."/>
            <person name="Berriman M."/>
            <person name="Song J."/>
            <person name="Olsen R."/>
            <person name="Szafranski K."/>
            <person name="Xu Q."/>
            <person name="Tunggal B."/>
            <person name="Kummerfeld S."/>
            <person name="Madera M."/>
            <person name="Konfortov B.A."/>
            <person name="Rivero F."/>
            <person name="Bankier A.T."/>
            <person name="Lehmann R."/>
            <person name="Hamlin N."/>
            <person name="Davies R."/>
            <person name="Gaudet P."/>
            <person name="Fey P."/>
            <person name="Pilcher K."/>
            <person name="Chen G."/>
            <person name="Saunders D."/>
            <person name="Sodergren E.J."/>
            <person name="Davis P."/>
            <person name="Kerhornou A."/>
            <person name="Nie X."/>
            <person name="Hall N."/>
            <person name="Anjard C."/>
            <person name="Hemphill L."/>
            <person name="Bason N."/>
            <person name="Farbrother P."/>
            <person name="Desany B."/>
            <person name="Just E."/>
            <person name="Morio T."/>
            <person name="Rost R."/>
            <person name="Churcher C.M."/>
            <person name="Cooper J."/>
            <person name="Haydock S."/>
            <person name="van Driessche N."/>
            <person name="Cronin A."/>
            <person name="Goodhead I."/>
            <person name="Muzny D.M."/>
            <person name="Mourier T."/>
            <person name="Pain A."/>
            <person name="Lu M."/>
            <person name="Harper D."/>
            <person name="Lindsay R."/>
            <person name="Hauser H."/>
            <person name="James K.D."/>
            <person name="Quiles M."/>
            <person name="Madan Babu M."/>
            <person name="Saito T."/>
            <person name="Buchrieser C."/>
            <person name="Wardroper A."/>
            <person name="Felder M."/>
            <person name="Thangavelu M."/>
            <person name="Johnson D."/>
            <person name="Knights A."/>
            <person name="Loulseged H."/>
            <person name="Mungall K.L."/>
            <person name="Oliver K."/>
            <person name="Price C."/>
            <person name="Quail M.A."/>
            <person name="Urushihara H."/>
            <person name="Hernandez J."/>
            <person name="Rabbinowitsch E."/>
            <person name="Steffen D."/>
            <person name="Sanders M."/>
            <person name="Ma J."/>
            <person name="Kohara Y."/>
            <person name="Sharp S."/>
            <person name="Simmonds M.N."/>
            <person name="Spiegler S."/>
            <person name="Tivey A."/>
            <person name="Sugano S."/>
            <person name="White B."/>
            <person name="Walker D."/>
            <person name="Woodward J.R."/>
            <person name="Winckler T."/>
            <person name="Tanaka Y."/>
            <person name="Shaulsky G."/>
            <person name="Schleicher M."/>
            <person name="Weinstock G.M."/>
            <person name="Rosenthal A."/>
            <person name="Cox E.C."/>
            <person name="Chisholm R.L."/>
            <person name="Gibbs R.A."/>
            <person name="Loomis W.F."/>
            <person name="Platzer M."/>
            <person name="Kay R.R."/>
            <person name="Williams J.G."/>
            <person name="Dear P.H."/>
            <person name="Noegel A.A."/>
            <person name="Barrell B.G."/>
            <person name="Kuspa A."/>
        </authorList>
    </citation>
    <scope>NUCLEOTIDE SEQUENCE [LARGE SCALE GENOMIC DNA]</scope>
    <source>
        <strain>AX4</strain>
    </source>
</reference>
<comment type="subcellular location">
    <subcellularLocation>
        <location evidence="2">Membrane</location>
        <topology evidence="2">Single-pass membrane protein</topology>
    </subcellularLocation>
</comment>
<evidence type="ECO:0000255" key="1"/>
<evidence type="ECO:0000305" key="2"/>
<sequence length="71" mass="8026">MYKDYLFKSNKGYLSLTLVTLPVCSSLHCYFLWTTLSRLSSLPIDVPRSVCSVASLDLDLVIINLLSILRD</sequence>
<protein>
    <recommendedName>
        <fullName>Uncharacterized transmembrane protein DDB_G0284989</fullName>
    </recommendedName>
</protein>
<dbReference type="EMBL" id="AAFI02000073">
    <property type="protein sequence ID" value="EAL64958.1"/>
    <property type="molecule type" value="Genomic_DNA"/>
</dbReference>
<dbReference type="RefSeq" id="XP_639979.1">
    <property type="nucleotide sequence ID" value="XM_634887.1"/>
</dbReference>
<dbReference type="PaxDb" id="44689-DDB0186304"/>
<dbReference type="EnsemblProtists" id="EAL64958">
    <property type="protein sequence ID" value="EAL64958"/>
    <property type="gene ID" value="DDB_G0284989"/>
</dbReference>
<dbReference type="GeneID" id="8624892"/>
<dbReference type="KEGG" id="ddi:DDB_G0284989"/>
<dbReference type="VEuPathDB" id="AmoebaDB:DDB_G0284989"/>
<dbReference type="HOGENOM" id="CLU_2745367_0_0_1"/>
<dbReference type="InParanoid" id="Q54NT8"/>
<dbReference type="PRO" id="PR:Q54NT8"/>
<dbReference type="Proteomes" id="UP000002195">
    <property type="component" value="Chromosome 4"/>
</dbReference>
<dbReference type="GO" id="GO:0016020">
    <property type="term" value="C:membrane"/>
    <property type="evidence" value="ECO:0007669"/>
    <property type="project" value="UniProtKB-SubCell"/>
</dbReference>